<proteinExistence type="inferred from homology"/>
<dbReference type="EC" id="6.1.1.14" evidence="1"/>
<dbReference type="EMBL" id="CP000507">
    <property type="protein sequence ID" value="ABL98237.1"/>
    <property type="molecule type" value="Genomic_DNA"/>
</dbReference>
<dbReference type="RefSeq" id="WP_011758148.1">
    <property type="nucleotide sequence ID" value="NC_008700.1"/>
</dbReference>
<dbReference type="SMR" id="A1S1I1"/>
<dbReference type="STRING" id="326297.Sama_0025"/>
<dbReference type="KEGG" id="saz:Sama_0025"/>
<dbReference type="eggNOG" id="COG0751">
    <property type="taxonomic scope" value="Bacteria"/>
</dbReference>
<dbReference type="HOGENOM" id="CLU_007220_2_2_6"/>
<dbReference type="OrthoDB" id="9775440at2"/>
<dbReference type="Proteomes" id="UP000009175">
    <property type="component" value="Chromosome"/>
</dbReference>
<dbReference type="GO" id="GO:0005829">
    <property type="term" value="C:cytosol"/>
    <property type="evidence" value="ECO:0007669"/>
    <property type="project" value="TreeGrafter"/>
</dbReference>
<dbReference type="GO" id="GO:0004814">
    <property type="term" value="F:arginine-tRNA ligase activity"/>
    <property type="evidence" value="ECO:0007669"/>
    <property type="project" value="InterPro"/>
</dbReference>
<dbReference type="GO" id="GO:0005524">
    <property type="term" value="F:ATP binding"/>
    <property type="evidence" value="ECO:0007669"/>
    <property type="project" value="UniProtKB-UniRule"/>
</dbReference>
<dbReference type="GO" id="GO:0004820">
    <property type="term" value="F:glycine-tRNA ligase activity"/>
    <property type="evidence" value="ECO:0007669"/>
    <property type="project" value="UniProtKB-UniRule"/>
</dbReference>
<dbReference type="GO" id="GO:0006420">
    <property type="term" value="P:arginyl-tRNA aminoacylation"/>
    <property type="evidence" value="ECO:0007669"/>
    <property type="project" value="InterPro"/>
</dbReference>
<dbReference type="GO" id="GO:0006426">
    <property type="term" value="P:glycyl-tRNA aminoacylation"/>
    <property type="evidence" value="ECO:0007669"/>
    <property type="project" value="UniProtKB-UniRule"/>
</dbReference>
<dbReference type="Gene3D" id="1.10.730.10">
    <property type="entry name" value="Isoleucyl-tRNA Synthetase, Domain 1"/>
    <property type="match status" value="1"/>
</dbReference>
<dbReference type="HAMAP" id="MF_00255">
    <property type="entry name" value="Gly_tRNA_synth_beta"/>
    <property type="match status" value="1"/>
</dbReference>
<dbReference type="InterPro" id="IPR008909">
    <property type="entry name" value="DALR_anticod-bd"/>
</dbReference>
<dbReference type="InterPro" id="IPR015944">
    <property type="entry name" value="Gly-tRNA-synth_bsu"/>
</dbReference>
<dbReference type="InterPro" id="IPR006194">
    <property type="entry name" value="Gly-tRNA-synth_heterodimer"/>
</dbReference>
<dbReference type="NCBIfam" id="TIGR00211">
    <property type="entry name" value="glyS"/>
    <property type="match status" value="1"/>
</dbReference>
<dbReference type="PANTHER" id="PTHR30075:SF2">
    <property type="entry name" value="GLYCINE--TRNA LIGASE, CHLOROPLASTIC_MITOCHONDRIAL 2"/>
    <property type="match status" value="1"/>
</dbReference>
<dbReference type="PANTHER" id="PTHR30075">
    <property type="entry name" value="GLYCYL-TRNA SYNTHETASE"/>
    <property type="match status" value="1"/>
</dbReference>
<dbReference type="Pfam" id="PF05746">
    <property type="entry name" value="DALR_1"/>
    <property type="match status" value="1"/>
</dbReference>
<dbReference type="Pfam" id="PF02092">
    <property type="entry name" value="tRNA_synt_2f"/>
    <property type="match status" value="1"/>
</dbReference>
<dbReference type="PRINTS" id="PR01045">
    <property type="entry name" value="TRNASYNTHGB"/>
</dbReference>
<dbReference type="SMART" id="SM00836">
    <property type="entry name" value="DALR_1"/>
    <property type="match status" value="1"/>
</dbReference>
<dbReference type="SUPFAM" id="SSF109604">
    <property type="entry name" value="HD-domain/PDEase-like"/>
    <property type="match status" value="1"/>
</dbReference>
<dbReference type="PROSITE" id="PS50861">
    <property type="entry name" value="AA_TRNA_LIGASE_II_GLYAB"/>
    <property type="match status" value="1"/>
</dbReference>
<name>SYGB_SHEAM</name>
<gene>
    <name evidence="1" type="primary">glyS</name>
    <name type="ordered locus">Sama_0025</name>
</gene>
<organism>
    <name type="scientific">Shewanella amazonensis (strain ATCC BAA-1098 / SB2B)</name>
    <dbReference type="NCBI Taxonomy" id="326297"/>
    <lineage>
        <taxon>Bacteria</taxon>
        <taxon>Pseudomonadati</taxon>
        <taxon>Pseudomonadota</taxon>
        <taxon>Gammaproteobacteria</taxon>
        <taxon>Alteromonadales</taxon>
        <taxon>Shewanellaceae</taxon>
        <taxon>Shewanella</taxon>
    </lineage>
</organism>
<sequence>MKFENLLIEIGTEELPPKALRTLAESFQANFSEELTKAELPFESIEWYAAPRRLALYVKGLATAQEDKVVEKRGPAVQSAFDADGNPTKAAEGWARGNGITVAEAERLATDKGEWLVYRANVAGEPTSVLVPAMTQRALDKLPIPKPMRWGSNSTQFIRPVHTVTLLLGSELIAGEVLGIQSDRTIRGHRFMGESSFSLDHADNYLAALKERGKVIADYQARKALIKADAEKAAAVIGGNADIEESLLEEVASLVEWPVVLTAHFEEKFLAVPAEALVYTMKGDQKYFPVFSNDGKLLPNFIFVANIESKDPAQIIAGNEKVVRPRLADAEFFFNTDKKHTLASRLASLETVVFQKQLGTLKDRAERISALAGFIAGQIGASSEDAARAGLLSKCDLMTNMVMEFTDTQGTMGMHYARLDGEAEAVAVALEEQYKPKFSGDSVPSAGVSCAVALAEKLDTLSGIFGIGQAPKGAADPFALRRAAIGVLRIIVENKLPLDLVDLIAKAVELHGSNLSNALAADEVLEFLMGRFRAWYQDKGISTDVILAVLARRPTRPADFDDRILAVSHFRTLEQAAALAAANKRVSNILAKVEGELPSSINDALLSEAAEKALAAKLAEVTPVIAPLFAAGNYQQALTELAALRESVDQFFEDVMVMADDQALRNNRLALLGNLRDQFLHVADISLLQ</sequence>
<comment type="catalytic activity">
    <reaction evidence="1">
        <text>tRNA(Gly) + glycine + ATP = glycyl-tRNA(Gly) + AMP + diphosphate</text>
        <dbReference type="Rhea" id="RHEA:16013"/>
        <dbReference type="Rhea" id="RHEA-COMP:9664"/>
        <dbReference type="Rhea" id="RHEA-COMP:9683"/>
        <dbReference type="ChEBI" id="CHEBI:30616"/>
        <dbReference type="ChEBI" id="CHEBI:33019"/>
        <dbReference type="ChEBI" id="CHEBI:57305"/>
        <dbReference type="ChEBI" id="CHEBI:78442"/>
        <dbReference type="ChEBI" id="CHEBI:78522"/>
        <dbReference type="ChEBI" id="CHEBI:456215"/>
        <dbReference type="EC" id="6.1.1.14"/>
    </reaction>
</comment>
<comment type="subunit">
    <text evidence="1">Tetramer of two alpha and two beta subunits.</text>
</comment>
<comment type="subcellular location">
    <subcellularLocation>
        <location evidence="1">Cytoplasm</location>
    </subcellularLocation>
</comment>
<comment type="similarity">
    <text evidence="1">Belongs to the class-II aminoacyl-tRNA synthetase family.</text>
</comment>
<reference key="1">
    <citation type="submission" date="2006-12" db="EMBL/GenBank/DDBJ databases">
        <title>Complete sequence of Shewanella amazonensis SB2B.</title>
        <authorList>
            <consortium name="US DOE Joint Genome Institute"/>
            <person name="Copeland A."/>
            <person name="Lucas S."/>
            <person name="Lapidus A."/>
            <person name="Barry K."/>
            <person name="Detter J.C."/>
            <person name="Glavina del Rio T."/>
            <person name="Hammon N."/>
            <person name="Israni S."/>
            <person name="Dalin E."/>
            <person name="Tice H."/>
            <person name="Pitluck S."/>
            <person name="Munk A.C."/>
            <person name="Brettin T."/>
            <person name="Bruce D."/>
            <person name="Han C."/>
            <person name="Tapia R."/>
            <person name="Gilna P."/>
            <person name="Schmutz J."/>
            <person name="Larimer F."/>
            <person name="Land M."/>
            <person name="Hauser L."/>
            <person name="Kyrpides N."/>
            <person name="Mikhailova N."/>
            <person name="Fredrickson J."/>
            <person name="Richardson P."/>
        </authorList>
    </citation>
    <scope>NUCLEOTIDE SEQUENCE [LARGE SCALE GENOMIC DNA]</scope>
    <source>
        <strain>ATCC BAA-1098 / SB2B</strain>
    </source>
</reference>
<accession>A1S1I1</accession>
<evidence type="ECO:0000255" key="1">
    <source>
        <dbReference type="HAMAP-Rule" id="MF_00255"/>
    </source>
</evidence>
<protein>
    <recommendedName>
        <fullName evidence="1">Glycine--tRNA ligase beta subunit</fullName>
        <ecNumber evidence="1">6.1.1.14</ecNumber>
    </recommendedName>
    <alternativeName>
        <fullName evidence="1">Glycyl-tRNA synthetase beta subunit</fullName>
        <shortName evidence="1">GlyRS</shortName>
    </alternativeName>
</protein>
<keyword id="KW-0030">Aminoacyl-tRNA synthetase</keyword>
<keyword id="KW-0067">ATP-binding</keyword>
<keyword id="KW-0963">Cytoplasm</keyword>
<keyword id="KW-0436">Ligase</keyword>
<keyword id="KW-0547">Nucleotide-binding</keyword>
<keyword id="KW-0648">Protein biosynthesis</keyword>
<keyword id="KW-1185">Reference proteome</keyword>
<feature type="chain" id="PRO_1000006399" description="Glycine--tRNA ligase beta subunit">
    <location>
        <begin position="1"/>
        <end position="689"/>
    </location>
</feature>